<proteinExistence type="evidence at protein level"/>
<sequence>MAFLCPVRMRRDKKKATNASIERDLPAVGVLGMGRITGSSSIETLVRVGIEKEHGLSPDSKMVVLHDFTPCVDDELEVKRGQLVNILYRENDWVYVIGQDSRQEGFIPFSYCAPCNTQLADLAVKKKLPREQCPEQPIEENIPLLGTDNKLDVLCDETLNPGSANSIENTLLVEPECTPFVKEPSGRCIVLYTFIARDENDLSVERGEFVTVLNREDPDWFWIMRSDGQEGFVPASFIYPADSVRVLQQQKATLNAMETILQQGQQGQQSQQQQQPQLGLGTDDLRYHGTELVMLYDYKAQAPDDLYLSVRRGDWIYADLTNQTVDGWLWAYAPKTRKYGFIPKAYARPPAMTSL</sequence>
<reference evidence="7" key="1">
    <citation type="journal article" date="2000" name="Science">
        <title>The genome sequence of Drosophila melanogaster.</title>
        <authorList>
            <person name="Adams M.D."/>
            <person name="Celniker S.E."/>
            <person name="Holt R.A."/>
            <person name="Evans C.A."/>
            <person name="Gocayne J.D."/>
            <person name="Amanatides P.G."/>
            <person name="Scherer S.E."/>
            <person name="Li P.W."/>
            <person name="Hoskins R.A."/>
            <person name="Galle R.F."/>
            <person name="George R.A."/>
            <person name="Lewis S.E."/>
            <person name="Richards S."/>
            <person name="Ashburner M."/>
            <person name="Henderson S.N."/>
            <person name="Sutton G.G."/>
            <person name="Wortman J.R."/>
            <person name="Yandell M.D."/>
            <person name="Zhang Q."/>
            <person name="Chen L.X."/>
            <person name="Brandon R.C."/>
            <person name="Rogers Y.-H.C."/>
            <person name="Blazej R.G."/>
            <person name="Champe M."/>
            <person name="Pfeiffer B.D."/>
            <person name="Wan K.H."/>
            <person name="Doyle C."/>
            <person name="Baxter E.G."/>
            <person name="Helt G."/>
            <person name="Nelson C.R."/>
            <person name="Miklos G.L.G."/>
            <person name="Abril J.F."/>
            <person name="Agbayani A."/>
            <person name="An H.-J."/>
            <person name="Andrews-Pfannkoch C."/>
            <person name="Baldwin D."/>
            <person name="Ballew R.M."/>
            <person name="Basu A."/>
            <person name="Baxendale J."/>
            <person name="Bayraktaroglu L."/>
            <person name="Beasley E.M."/>
            <person name="Beeson K.Y."/>
            <person name="Benos P.V."/>
            <person name="Berman B.P."/>
            <person name="Bhandari D."/>
            <person name="Bolshakov S."/>
            <person name="Borkova D."/>
            <person name="Botchan M.R."/>
            <person name="Bouck J."/>
            <person name="Brokstein P."/>
            <person name="Brottier P."/>
            <person name="Burtis K.C."/>
            <person name="Busam D.A."/>
            <person name="Butler H."/>
            <person name="Cadieu E."/>
            <person name="Center A."/>
            <person name="Chandra I."/>
            <person name="Cherry J.M."/>
            <person name="Cawley S."/>
            <person name="Dahlke C."/>
            <person name="Davenport L.B."/>
            <person name="Davies P."/>
            <person name="de Pablos B."/>
            <person name="Delcher A."/>
            <person name="Deng Z."/>
            <person name="Mays A.D."/>
            <person name="Dew I."/>
            <person name="Dietz S.M."/>
            <person name="Dodson K."/>
            <person name="Doup L.E."/>
            <person name="Downes M."/>
            <person name="Dugan-Rocha S."/>
            <person name="Dunkov B.C."/>
            <person name="Dunn P."/>
            <person name="Durbin K.J."/>
            <person name="Evangelista C.C."/>
            <person name="Ferraz C."/>
            <person name="Ferriera S."/>
            <person name="Fleischmann W."/>
            <person name="Fosler C."/>
            <person name="Gabrielian A.E."/>
            <person name="Garg N.S."/>
            <person name="Gelbart W.M."/>
            <person name="Glasser K."/>
            <person name="Glodek A."/>
            <person name="Gong F."/>
            <person name="Gorrell J.H."/>
            <person name="Gu Z."/>
            <person name="Guan P."/>
            <person name="Harris M."/>
            <person name="Harris N.L."/>
            <person name="Harvey D.A."/>
            <person name="Heiman T.J."/>
            <person name="Hernandez J.R."/>
            <person name="Houck J."/>
            <person name="Hostin D."/>
            <person name="Houston K.A."/>
            <person name="Howland T.J."/>
            <person name="Wei M.-H."/>
            <person name="Ibegwam C."/>
            <person name="Jalali M."/>
            <person name="Kalush F."/>
            <person name="Karpen G.H."/>
            <person name="Ke Z."/>
            <person name="Kennison J.A."/>
            <person name="Ketchum K.A."/>
            <person name="Kimmel B.E."/>
            <person name="Kodira C.D."/>
            <person name="Kraft C.L."/>
            <person name="Kravitz S."/>
            <person name="Kulp D."/>
            <person name="Lai Z."/>
            <person name="Lasko P."/>
            <person name="Lei Y."/>
            <person name="Levitsky A.A."/>
            <person name="Li J.H."/>
            <person name="Li Z."/>
            <person name="Liang Y."/>
            <person name="Lin X."/>
            <person name="Liu X."/>
            <person name="Mattei B."/>
            <person name="McIntosh T.C."/>
            <person name="McLeod M.P."/>
            <person name="McPherson D."/>
            <person name="Merkulov G."/>
            <person name="Milshina N.V."/>
            <person name="Mobarry C."/>
            <person name="Morris J."/>
            <person name="Moshrefi A."/>
            <person name="Mount S.M."/>
            <person name="Moy M."/>
            <person name="Murphy B."/>
            <person name="Murphy L."/>
            <person name="Muzny D.M."/>
            <person name="Nelson D.L."/>
            <person name="Nelson D.R."/>
            <person name="Nelson K.A."/>
            <person name="Nixon K."/>
            <person name="Nusskern D.R."/>
            <person name="Pacleb J.M."/>
            <person name="Palazzolo M."/>
            <person name="Pittman G.S."/>
            <person name="Pan S."/>
            <person name="Pollard J."/>
            <person name="Puri V."/>
            <person name="Reese M.G."/>
            <person name="Reinert K."/>
            <person name="Remington K."/>
            <person name="Saunders R.D.C."/>
            <person name="Scheeler F."/>
            <person name="Shen H."/>
            <person name="Shue B.C."/>
            <person name="Siden-Kiamos I."/>
            <person name="Simpson M."/>
            <person name="Skupski M.P."/>
            <person name="Smith T.J."/>
            <person name="Spier E."/>
            <person name="Spradling A.C."/>
            <person name="Stapleton M."/>
            <person name="Strong R."/>
            <person name="Sun E."/>
            <person name="Svirskas R."/>
            <person name="Tector C."/>
            <person name="Turner R."/>
            <person name="Venter E."/>
            <person name="Wang A.H."/>
            <person name="Wang X."/>
            <person name="Wang Z.-Y."/>
            <person name="Wassarman D.A."/>
            <person name="Weinstock G.M."/>
            <person name="Weissenbach J."/>
            <person name="Williams S.M."/>
            <person name="Woodage T."/>
            <person name="Worley K.C."/>
            <person name="Wu D."/>
            <person name="Yang S."/>
            <person name="Yao Q.A."/>
            <person name="Ye J."/>
            <person name="Yeh R.-F."/>
            <person name="Zaveri J.S."/>
            <person name="Zhan M."/>
            <person name="Zhang G."/>
            <person name="Zhao Q."/>
            <person name="Zheng L."/>
            <person name="Zheng X.H."/>
            <person name="Zhong F.N."/>
            <person name="Zhong W."/>
            <person name="Zhou X."/>
            <person name="Zhu S.C."/>
            <person name="Zhu X."/>
            <person name="Smith H.O."/>
            <person name="Gibbs R.A."/>
            <person name="Myers E.W."/>
            <person name="Rubin G.M."/>
            <person name="Venter J.C."/>
        </authorList>
    </citation>
    <scope>NUCLEOTIDE SEQUENCE [LARGE SCALE GENOMIC DNA]</scope>
    <source>
        <strain evidence="7">Berkeley</strain>
    </source>
</reference>
<reference evidence="7" key="2">
    <citation type="journal article" date="2002" name="Genome Biol.">
        <title>Annotation of the Drosophila melanogaster euchromatic genome: a systematic review.</title>
        <authorList>
            <person name="Misra S."/>
            <person name="Crosby M.A."/>
            <person name="Mungall C.J."/>
            <person name="Matthews B.B."/>
            <person name="Campbell K.S."/>
            <person name="Hradecky P."/>
            <person name="Huang Y."/>
            <person name="Kaminker J.S."/>
            <person name="Millburn G.H."/>
            <person name="Prochnik S.E."/>
            <person name="Smith C.D."/>
            <person name="Tupy J.L."/>
            <person name="Whitfield E.J."/>
            <person name="Bayraktaroglu L."/>
            <person name="Berman B.P."/>
            <person name="Bettencourt B.R."/>
            <person name="Celniker S.E."/>
            <person name="de Grey A.D.N.J."/>
            <person name="Drysdale R.A."/>
            <person name="Harris N.L."/>
            <person name="Richter J."/>
            <person name="Russo S."/>
            <person name="Schroeder A.J."/>
            <person name="Shu S.Q."/>
            <person name="Stapleton M."/>
            <person name="Yamada C."/>
            <person name="Ashburner M."/>
            <person name="Gelbart W.M."/>
            <person name="Rubin G.M."/>
            <person name="Lewis S.E."/>
        </authorList>
    </citation>
    <scope>GENOME REANNOTATION</scope>
    <source>
        <strain evidence="7">Berkeley</strain>
    </source>
</reference>
<reference evidence="5" key="3">
    <citation type="submission" date="2009-10" db="EMBL/GenBank/DDBJ databases">
        <authorList>
            <person name="Carlson J."/>
            <person name="Booth B."/>
            <person name="Frise E."/>
            <person name="Park S."/>
            <person name="Wan K."/>
            <person name="Yu C."/>
            <person name="Celniker S."/>
        </authorList>
    </citation>
    <scope>NUCLEOTIDE SEQUENCE [LARGE SCALE MRNA]</scope>
    <source>
        <strain evidence="5">Berkeley</strain>
    </source>
</reference>
<reference evidence="4" key="4">
    <citation type="journal article" date="2016" name="Elife">
        <title>The novel SH3 domain protein Dlish/CG10933 mediates fat signaling in Drosophila by binding and regulating Dachs.</title>
        <authorList>
            <person name="Zhang Y."/>
            <person name="Wang X."/>
            <person name="Matakatsu H."/>
            <person name="Fehon R."/>
            <person name="Blair S.S."/>
        </authorList>
    </citation>
    <scope>FUNCTION</scope>
    <scope>INTERACTION WITH APP; CUL1; DACHS; DCO; FBXL7; FT AND SLMB</scope>
    <scope>SUBCELLULAR LOCATION</scope>
    <scope>PALMITOYLATION</scope>
    <scope>DISRUPTION PHENOTYPE</scope>
</reference>
<reference key="5">
    <citation type="journal article" date="2016" name="Elife">
        <authorList>
            <person name="Zhang Y."/>
            <person name="Wang X."/>
            <person name="Matakatsu H."/>
            <person name="Fehon R."/>
            <person name="Blair S.S."/>
        </authorList>
    </citation>
    <scope>ERRATUM OF PUBMED:27692068</scope>
</reference>
<protein>
    <recommendedName>
        <fullName evidence="4">SH3 domain-containing protein Dlish</fullName>
    </recommendedName>
    <alternativeName>
        <fullName evidence="3">Dachs ligand with SH3 domains</fullName>
    </alternativeName>
</protein>
<evidence type="ECO:0000255" key="1">
    <source>
        <dbReference type="PROSITE-ProRule" id="PRU00192"/>
    </source>
</evidence>
<evidence type="ECO:0000269" key="2">
    <source>
    </source>
</evidence>
<evidence type="ECO:0000303" key="3">
    <source>
    </source>
</evidence>
<evidence type="ECO:0000305" key="4"/>
<evidence type="ECO:0000312" key="5">
    <source>
        <dbReference type="EMBL" id="ACX47665.1"/>
    </source>
</evidence>
<evidence type="ECO:0000312" key="6">
    <source>
        <dbReference type="FlyBase" id="FBgn0034264"/>
    </source>
</evidence>
<evidence type="ECO:0000312" key="7">
    <source>
        <dbReference type="Proteomes" id="UP000000803"/>
    </source>
</evidence>
<organism evidence="7">
    <name type="scientific">Drosophila melanogaster</name>
    <name type="common">Fruit fly</name>
    <dbReference type="NCBI Taxonomy" id="7227"/>
    <lineage>
        <taxon>Eukaryota</taxon>
        <taxon>Metazoa</taxon>
        <taxon>Ecdysozoa</taxon>
        <taxon>Arthropoda</taxon>
        <taxon>Hexapoda</taxon>
        <taxon>Insecta</taxon>
        <taxon>Pterygota</taxon>
        <taxon>Neoptera</taxon>
        <taxon>Endopterygota</taxon>
        <taxon>Diptera</taxon>
        <taxon>Brachycera</taxon>
        <taxon>Muscomorpha</taxon>
        <taxon>Ephydroidea</taxon>
        <taxon>Drosophilidae</taxon>
        <taxon>Drosophila</taxon>
        <taxon>Sophophora</taxon>
    </lineage>
</organism>
<keyword id="KW-0963">Cytoplasm</keyword>
<keyword id="KW-0449">Lipoprotein</keyword>
<keyword id="KW-0564">Palmitate</keyword>
<keyword id="KW-1185">Reference proteome</keyword>
<keyword id="KW-0677">Repeat</keyword>
<keyword id="KW-0728">SH3 domain</keyword>
<gene>
    <name evidence="3" type="primary">Dlish</name>
    <name evidence="6" type="ORF">CG10933</name>
</gene>
<dbReference type="EMBL" id="AE013599">
    <property type="protein sequence ID" value="AAF57808.2"/>
    <property type="molecule type" value="Genomic_DNA"/>
</dbReference>
<dbReference type="EMBL" id="BT099964">
    <property type="protein sequence ID" value="ACX47665.1"/>
    <property type="molecule type" value="mRNA"/>
</dbReference>
<dbReference type="RefSeq" id="NP_611251.2">
    <property type="nucleotide sequence ID" value="NM_137407.3"/>
</dbReference>
<dbReference type="SMR" id="A1ZAY1"/>
<dbReference type="FunCoup" id="A1ZAY1">
    <property type="interactions" value="4"/>
</dbReference>
<dbReference type="IntAct" id="A1ZAY1">
    <property type="interactions" value="1"/>
</dbReference>
<dbReference type="STRING" id="7227.FBpp0086020"/>
<dbReference type="SwissPalm" id="A1ZAY1"/>
<dbReference type="PaxDb" id="7227-FBpp0086020"/>
<dbReference type="DNASU" id="37014"/>
<dbReference type="EnsemblMetazoa" id="FBtr0086860">
    <property type="protein sequence ID" value="FBpp0086020"/>
    <property type="gene ID" value="FBgn0034264"/>
</dbReference>
<dbReference type="GeneID" id="37014"/>
<dbReference type="KEGG" id="dme:Dmel_CG10933"/>
<dbReference type="UCSC" id="CG10933-RA">
    <property type="organism name" value="d. melanogaster"/>
</dbReference>
<dbReference type="AGR" id="FB:FBgn0034264"/>
<dbReference type="CTD" id="37014"/>
<dbReference type="FlyBase" id="FBgn0034264">
    <property type="gene designation" value="Dlish"/>
</dbReference>
<dbReference type="VEuPathDB" id="VectorBase:FBgn0034264"/>
<dbReference type="eggNOG" id="ENOG502QPX9">
    <property type="taxonomic scope" value="Eukaryota"/>
</dbReference>
<dbReference type="GeneTree" id="ENSGT00940000171466"/>
<dbReference type="HOGENOM" id="CLU_039664_1_0_1"/>
<dbReference type="InParanoid" id="A1ZAY1"/>
<dbReference type="OMA" id="MQHHANL"/>
<dbReference type="OrthoDB" id="9991832at2759"/>
<dbReference type="PhylomeDB" id="A1ZAY1"/>
<dbReference type="SignaLink" id="A1ZAY1"/>
<dbReference type="BioGRID-ORCS" id="37014">
    <property type="hits" value="0 hits in 1 CRISPR screen"/>
</dbReference>
<dbReference type="GenomeRNAi" id="37014"/>
<dbReference type="PRO" id="PR:A1ZAY1"/>
<dbReference type="Proteomes" id="UP000000803">
    <property type="component" value="Chromosome 2R"/>
</dbReference>
<dbReference type="Bgee" id="FBgn0034264">
    <property type="expression patterns" value="Expressed in eye disc (Drosophila) and 12 other cell types or tissues"/>
</dbReference>
<dbReference type="ExpressionAtlas" id="A1ZAY1">
    <property type="expression patterns" value="baseline and differential"/>
</dbReference>
<dbReference type="GO" id="GO:0045179">
    <property type="term" value="C:apical cortex"/>
    <property type="evidence" value="ECO:0000314"/>
    <property type="project" value="UniProtKB"/>
</dbReference>
<dbReference type="GO" id="GO:0016327">
    <property type="term" value="C:apicolateral plasma membrane"/>
    <property type="evidence" value="ECO:0000314"/>
    <property type="project" value="FlyBase"/>
</dbReference>
<dbReference type="GO" id="GO:0005929">
    <property type="term" value="C:cilium"/>
    <property type="evidence" value="ECO:0000318"/>
    <property type="project" value="GO_Central"/>
</dbReference>
<dbReference type="GO" id="GO:0005737">
    <property type="term" value="C:cytoplasm"/>
    <property type="evidence" value="ECO:0000314"/>
    <property type="project" value="UniProtKB"/>
</dbReference>
<dbReference type="GO" id="GO:0120219">
    <property type="term" value="C:subapical part of cell"/>
    <property type="evidence" value="ECO:0000314"/>
    <property type="project" value="FlyBase"/>
</dbReference>
<dbReference type="GO" id="GO:0045296">
    <property type="term" value="F:cadherin binding"/>
    <property type="evidence" value="ECO:0000353"/>
    <property type="project" value="FlyBase"/>
</dbReference>
<dbReference type="GO" id="GO:0090163">
    <property type="term" value="P:establishment of epithelial cell planar polarity"/>
    <property type="evidence" value="ECO:0000315"/>
    <property type="project" value="FlyBase"/>
</dbReference>
<dbReference type="GO" id="GO:0001736">
    <property type="term" value="P:establishment of planar polarity"/>
    <property type="evidence" value="ECO:0000315"/>
    <property type="project" value="FlyBase"/>
</dbReference>
<dbReference type="GO" id="GO:0035331">
    <property type="term" value="P:negative regulation of hippo signaling"/>
    <property type="evidence" value="ECO:0000315"/>
    <property type="project" value="FlyBase"/>
</dbReference>
<dbReference type="GO" id="GO:0032436">
    <property type="term" value="P:positive regulation of proteasomal ubiquitin-dependent protein catabolic process"/>
    <property type="evidence" value="ECO:0000316"/>
    <property type="project" value="FlyBase"/>
</dbReference>
<dbReference type="GO" id="GO:0090251">
    <property type="term" value="P:protein localization involved in establishment of planar polarity"/>
    <property type="evidence" value="ECO:0000315"/>
    <property type="project" value="FlyBase"/>
</dbReference>
<dbReference type="CDD" id="cd00174">
    <property type="entry name" value="SH3"/>
    <property type="match status" value="3"/>
</dbReference>
<dbReference type="FunFam" id="2.30.30.40:FF:000270">
    <property type="entry name" value="Blast:Tyrosine-protein kinase Src-1"/>
    <property type="match status" value="1"/>
</dbReference>
<dbReference type="FunFam" id="2.30.30.40:FF:000295">
    <property type="entry name" value="Blast:Tyrosine-protein kinase Src-1"/>
    <property type="match status" value="1"/>
</dbReference>
<dbReference type="FunFam" id="2.30.30.40:FF:000222">
    <property type="entry name" value="SH3 domain-containing protein Dlish"/>
    <property type="match status" value="1"/>
</dbReference>
<dbReference type="Gene3D" id="2.30.30.40">
    <property type="entry name" value="SH3 Domains"/>
    <property type="match status" value="3"/>
</dbReference>
<dbReference type="InterPro" id="IPR051228">
    <property type="entry name" value="NADPH_Oxidase/PX-Domain"/>
</dbReference>
<dbReference type="InterPro" id="IPR036028">
    <property type="entry name" value="SH3-like_dom_sf"/>
</dbReference>
<dbReference type="InterPro" id="IPR001452">
    <property type="entry name" value="SH3_domain"/>
</dbReference>
<dbReference type="PANTHER" id="PTHR15706:SF2">
    <property type="entry name" value="SH3 AND PX DOMAIN-CONTAINING PROTEIN 2A"/>
    <property type="match status" value="1"/>
</dbReference>
<dbReference type="PANTHER" id="PTHR15706">
    <property type="entry name" value="SH3 MULTIPLE DOMAIN"/>
    <property type="match status" value="1"/>
</dbReference>
<dbReference type="Pfam" id="PF07653">
    <property type="entry name" value="SH3_2"/>
    <property type="match status" value="1"/>
</dbReference>
<dbReference type="Pfam" id="PF14604">
    <property type="entry name" value="SH3_9"/>
    <property type="match status" value="1"/>
</dbReference>
<dbReference type="SMART" id="SM00326">
    <property type="entry name" value="SH3"/>
    <property type="match status" value="3"/>
</dbReference>
<dbReference type="SUPFAM" id="SSF50044">
    <property type="entry name" value="SH3-domain"/>
    <property type="match status" value="3"/>
</dbReference>
<dbReference type="PROSITE" id="PS50002">
    <property type="entry name" value="SH3"/>
    <property type="match status" value="3"/>
</dbReference>
<comment type="function">
    <text evidence="2">Required for the apical cell cortex localization, total cellular level and full activity of dachs.</text>
</comment>
<comment type="subunit">
    <text evidence="2">Interacts with dachs (via C-terminus); the interaction is direct. Interacts (via N-terminus including SH3 domain 1) with palmitoyltransferase app; this leads to palmitoylation of Dlish by app. Also interacts with dco, ft, ft-regulated E3 ubiquitin ligase Fbxl7, F-box protein slmb and SCF E3 ubiquitin-protein ligase complex component Cul1.</text>
</comment>
<comment type="subcellular location">
    <subcellularLocation>
        <location evidence="2">Cytoplasm</location>
    </subcellularLocation>
    <subcellularLocation>
        <location evidence="2">Cytoplasm</location>
        <location evidence="2">Cell cortex</location>
    </subcellularLocation>
    <text evidence="2">Low levels are found diffusely in the cytoplasm with high levels concentrated at the subapical cell cortex.</text>
</comment>
<comment type="PTM">
    <text evidence="2">Palmitoylated by app.</text>
</comment>
<comment type="disruption phenotype">
    <text evidence="2">RNAi-mediated knockdown results in reduced spacing between the anterior and posterior crossveins of the wing, reduced levels of subapical cortical dachs, increased levels of dachs throughout the cytoplasm, increased total cellular levels of dachs and suppression of the overgrowth and dachs up-regulation seen in ft mutants.</text>
</comment>
<feature type="chain" id="PRO_0000438853" description="SH3 domain-containing protein Dlish">
    <location>
        <begin position="1"/>
        <end position="355"/>
    </location>
</feature>
<feature type="domain" description="SH3 1" evidence="1">
    <location>
        <begin position="57"/>
        <end position="117"/>
    </location>
</feature>
<feature type="domain" description="SH3 2" evidence="1">
    <location>
        <begin position="183"/>
        <end position="243"/>
    </location>
</feature>
<feature type="domain" description="SH3 3" evidence="1">
    <location>
        <begin position="287"/>
        <end position="352"/>
    </location>
</feature>
<accession>A1ZAY1</accession>
<name>DLISH_DROME</name>